<comment type="subcellular location">
    <subcellularLocation>
        <location>Cytoplasm</location>
    </subcellularLocation>
    <subcellularLocation>
        <location evidence="1">Cell inner membrane</location>
        <topology evidence="1">Peripheral membrane protein</topology>
        <orientation evidence="1">Cytoplasmic side</orientation>
    </subcellularLocation>
</comment>
<comment type="similarity">
    <text evidence="1">Belongs to the HflD family.</text>
</comment>
<sequence length="208" mass="22730">MAKNYYDITLALAGICQSARLVQQLAHEGQCDNDALNTVLRGLLQTNPSSTLAVYGDTEQVLKMGLETLQSVLNANRQGEAAELTRYTLSLMVLERKLSASKSAMNTLGERISQLDRQLAHFDLESETMMSSLASIYVDVVSPLGPRIQVTGSPAILQSPLVQAKVRATLLAGIRSAVLWQQVGGSRLQLMFSRNRLFKQAQSILAHT</sequence>
<accession>B2K712</accession>
<name>HFLD_YERPB</name>
<feature type="chain" id="PRO_1000132309" description="High frequency lysogenization protein HflD homolog">
    <location>
        <begin position="1"/>
        <end position="208"/>
    </location>
</feature>
<proteinExistence type="inferred from homology"/>
<gene>
    <name evidence="1" type="primary">hflD</name>
    <name type="ordered locus">YPTS_2514</name>
</gene>
<evidence type="ECO:0000255" key="1">
    <source>
        <dbReference type="HAMAP-Rule" id="MF_00695"/>
    </source>
</evidence>
<reference key="1">
    <citation type="submission" date="2008-04" db="EMBL/GenBank/DDBJ databases">
        <title>Complete sequence of Yersinia pseudotuberculosis PB1/+.</title>
        <authorList>
            <person name="Copeland A."/>
            <person name="Lucas S."/>
            <person name="Lapidus A."/>
            <person name="Glavina del Rio T."/>
            <person name="Dalin E."/>
            <person name="Tice H."/>
            <person name="Bruce D."/>
            <person name="Goodwin L."/>
            <person name="Pitluck S."/>
            <person name="Munk A.C."/>
            <person name="Brettin T."/>
            <person name="Detter J.C."/>
            <person name="Han C."/>
            <person name="Tapia R."/>
            <person name="Schmutz J."/>
            <person name="Larimer F."/>
            <person name="Land M."/>
            <person name="Hauser L."/>
            <person name="Challacombe J.F."/>
            <person name="Green L."/>
            <person name="Lindler L.E."/>
            <person name="Nikolich M.P."/>
            <person name="Richardson P."/>
        </authorList>
    </citation>
    <scope>NUCLEOTIDE SEQUENCE [LARGE SCALE GENOMIC DNA]</scope>
    <source>
        <strain>PB1/+</strain>
    </source>
</reference>
<keyword id="KW-0997">Cell inner membrane</keyword>
<keyword id="KW-1003">Cell membrane</keyword>
<keyword id="KW-0963">Cytoplasm</keyword>
<keyword id="KW-0472">Membrane</keyword>
<protein>
    <recommendedName>
        <fullName evidence="1">High frequency lysogenization protein HflD homolog</fullName>
    </recommendedName>
</protein>
<dbReference type="EMBL" id="CP001048">
    <property type="protein sequence ID" value="ACC89475.1"/>
    <property type="molecule type" value="Genomic_DNA"/>
</dbReference>
<dbReference type="RefSeq" id="WP_002210914.1">
    <property type="nucleotide sequence ID" value="NZ_CP009780.1"/>
</dbReference>
<dbReference type="SMR" id="B2K712"/>
<dbReference type="GeneID" id="57976936"/>
<dbReference type="KEGG" id="ypb:YPTS_2514"/>
<dbReference type="PATRIC" id="fig|502801.10.peg.1926"/>
<dbReference type="GO" id="GO:0005737">
    <property type="term" value="C:cytoplasm"/>
    <property type="evidence" value="ECO:0007669"/>
    <property type="project" value="UniProtKB-SubCell"/>
</dbReference>
<dbReference type="GO" id="GO:0005886">
    <property type="term" value="C:plasma membrane"/>
    <property type="evidence" value="ECO:0007669"/>
    <property type="project" value="UniProtKB-SubCell"/>
</dbReference>
<dbReference type="FunFam" id="1.10.3890.10:FF:000001">
    <property type="entry name" value="High frequency lysogenization protein HflD homolog"/>
    <property type="match status" value="1"/>
</dbReference>
<dbReference type="Gene3D" id="1.10.3890.10">
    <property type="entry name" value="HflD-like"/>
    <property type="match status" value="1"/>
</dbReference>
<dbReference type="HAMAP" id="MF_00695">
    <property type="entry name" value="HflD_protein"/>
    <property type="match status" value="1"/>
</dbReference>
<dbReference type="InterPro" id="IPR007451">
    <property type="entry name" value="HflD"/>
</dbReference>
<dbReference type="InterPro" id="IPR035932">
    <property type="entry name" value="HflD-like_sf"/>
</dbReference>
<dbReference type="NCBIfam" id="NF001246">
    <property type="entry name" value="PRK00218.1-2"/>
    <property type="match status" value="1"/>
</dbReference>
<dbReference type="NCBIfam" id="NF001248">
    <property type="entry name" value="PRK00218.1-4"/>
    <property type="match status" value="1"/>
</dbReference>
<dbReference type="NCBIfam" id="NF001249">
    <property type="entry name" value="PRK00218.1-5"/>
    <property type="match status" value="1"/>
</dbReference>
<dbReference type="PANTHER" id="PTHR38100">
    <property type="entry name" value="HIGH FREQUENCY LYSOGENIZATION PROTEIN HFLD"/>
    <property type="match status" value="1"/>
</dbReference>
<dbReference type="PANTHER" id="PTHR38100:SF1">
    <property type="entry name" value="HIGH FREQUENCY LYSOGENIZATION PROTEIN HFLD"/>
    <property type="match status" value="1"/>
</dbReference>
<dbReference type="Pfam" id="PF04356">
    <property type="entry name" value="DUF489"/>
    <property type="match status" value="1"/>
</dbReference>
<dbReference type="SUPFAM" id="SSF101322">
    <property type="entry name" value="YcfC-like"/>
    <property type="match status" value="1"/>
</dbReference>
<organism>
    <name type="scientific">Yersinia pseudotuberculosis serotype IB (strain PB1/+)</name>
    <dbReference type="NCBI Taxonomy" id="502801"/>
    <lineage>
        <taxon>Bacteria</taxon>
        <taxon>Pseudomonadati</taxon>
        <taxon>Pseudomonadota</taxon>
        <taxon>Gammaproteobacteria</taxon>
        <taxon>Enterobacterales</taxon>
        <taxon>Yersiniaceae</taxon>
        <taxon>Yersinia</taxon>
    </lineage>
</organism>